<organism>
    <name type="scientific">Bacillus thuringiensis (strain Al Hakam)</name>
    <dbReference type="NCBI Taxonomy" id="412694"/>
    <lineage>
        <taxon>Bacteria</taxon>
        <taxon>Bacillati</taxon>
        <taxon>Bacillota</taxon>
        <taxon>Bacilli</taxon>
        <taxon>Bacillales</taxon>
        <taxon>Bacillaceae</taxon>
        <taxon>Bacillus</taxon>
        <taxon>Bacillus cereus group</taxon>
    </lineage>
</organism>
<protein>
    <recommendedName>
        <fullName evidence="1">5-methyltetrahydropteroyltriglutamate--homocysteine methyltransferase</fullName>
        <ecNumber evidence="1">2.1.1.14</ecNumber>
    </recommendedName>
    <alternativeName>
        <fullName evidence="1">Cobalamin-independent methionine synthase</fullName>
    </alternativeName>
    <alternativeName>
        <fullName evidence="1">Methionine synthase, vitamin-B12 independent isozyme</fullName>
    </alternativeName>
</protein>
<keyword id="KW-0028">Amino-acid biosynthesis</keyword>
<keyword id="KW-0479">Metal-binding</keyword>
<keyword id="KW-0486">Methionine biosynthesis</keyword>
<keyword id="KW-0489">Methyltransferase</keyword>
<keyword id="KW-0677">Repeat</keyword>
<keyword id="KW-0808">Transferase</keyword>
<keyword id="KW-0862">Zinc</keyword>
<name>METE_BACAH</name>
<comment type="function">
    <text evidence="1">Catalyzes the transfer of a methyl group from 5-methyltetrahydrofolate to homocysteine resulting in methionine formation.</text>
</comment>
<comment type="catalytic activity">
    <reaction evidence="1">
        <text>5-methyltetrahydropteroyltri-L-glutamate + L-homocysteine = tetrahydropteroyltri-L-glutamate + L-methionine</text>
        <dbReference type="Rhea" id="RHEA:21196"/>
        <dbReference type="ChEBI" id="CHEBI:57844"/>
        <dbReference type="ChEBI" id="CHEBI:58140"/>
        <dbReference type="ChEBI" id="CHEBI:58199"/>
        <dbReference type="ChEBI" id="CHEBI:58207"/>
        <dbReference type="EC" id="2.1.1.14"/>
    </reaction>
</comment>
<comment type="cofactor">
    <cofactor evidence="1">
        <name>Zn(2+)</name>
        <dbReference type="ChEBI" id="CHEBI:29105"/>
    </cofactor>
    <text evidence="1">Binds 1 zinc ion per subunit.</text>
</comment>
<comment type="pathway">
    <text evidence="1">Amino-acid biosynthesis; L-methionine biosynthesis via de novo pathway; L-methionine from L-homocysteine (MetE route): step 1/1.</text>
</comment>
<comment type="similarity">
    <text evidence="1">Belongs to the vitamin-B12 independent methionine synthase family.</text>
</comment>
<gene>
    <name evidence="1" type="primary">metE</name>
    <name type="ordered locus">BALH_3622</name>
</gene>
<proteinExistence type="inferred from homology"/>
<dbReference type="EC" id="2.1.1.14" evidence="1"/>
<dbReference type="EMBL" id="CP000485">
    <property type="protein sequence ID" value="ABK86855.1"/>
    <property type="molecule type" value="Genomic_DNA"/>
</dbReference>
<dbReference type="RefSeq" id="WP_001007632.1">
    <property type="nucleotide sequence ID" value="NC_008600.1"/>
</dbReference>
<dbReference type="SMR" id="A0RI12"/>
<dbReference type="KEGG" id="btl:BALH_3622"/>
<dbReference type="HOGENOM" id="CLU_013175_0_0_9"/>
<dbReference type="UniPathway" id="UPA00051">
    <property type="reaction ID" value="UER00082"/>
</dbReference>
<dbReference type="GO" id="GO:0003871">
    <property type="term" value="F:5-methyltetrahydropteroyltriglutamate-homocysteine S-methyltransferase activity"/>
    <property type="evidence" value="ECO:0007669"/>
    <property type="project" value="UniProtKB-UniRule"/>
</dbReference>
<dbReference type="GO" id="GO:0008270">
    <property type="term" value="F:zinc ion binding"/>
    <property type="evidence" value="ECO:0007669"/>
    <property type="project" value="InterPro"/>
</dbReference>
<dbReference type="GO" id="GO:0009086">
    <property type="term" value="P:methionine biosynthetic process"/>
    <property type="evidence" value="ECO:0007669"/>
    <property type="project" value="UniProtKB-UniRule"/>
</dbReference>
<dbReference type="GO" id="GO:0032259">
    <property type="term" value="P:methylation"/>
    <property type="evidence" value="ECO:0007669"/>
    <property type="project" value="UniProtKB-KW"/>
</dbReference>
<dbReference type="CDD" id="cd03311">
    <property type="entry name" value="CIMS_C_terminal_like"/>
    <property type="match status" value="1"/>
</dbReference>
<dbReference type="CDD" id="cd03312">
    <property type="entry name" value="CIMS_N_terminal_like"/>
    <property type="match status" value="1"/>
</dbReference>
<dbReference type="Gene3D" id="3.20.20.210">
    <property type="match status" value="2"/>
</dbReference>
<dbReference type="HAMAP" id="MF_00172">
    <property type="entry name" value="Meth_synth"/>
    <property type="match status" value="1"/>
</dbReference>
<dbReference type="InterPro" id="IPR013215">
    <property type="entry name" value="Cbl-indep_Met_Synth_N"/>
</dbReference>
<dbReference type="InterPro" id="IPR006276">
    <property type="entry name" value="Cobalamin-indep_Met_synthase"/>
</dbReference>
<dbReference type="InterPro" id="IPR002629">
    <property type="entry name" value="Met_Synth_C/arc"/>
</dbReference>
<dbReference type="InterPro" id="IPR038071">
    <property type="entry name" value="UROD/MetE-like_sf"/>
</dbReference>
<dbReference type="NCBIfam" id="TIGR01371">
    <property type="entry name" value="met_syn_B12ind"/>
    <property type="match status" value="1"/>
</dbReference>
<dbReference type="NCBIfam" id="NF003556">
    <property type="entry name" value="PRK05222.1"/>
    <property type="match status" value="1"/>
</dbReference>
<dbReference type="PANTHER" id="PTHR30519">
    <property type="entry name" value="5-METHYLTETRAHYDROPTEROYLTRIGLUTAMATE--HOMOCYSTEINE METHYLTRANSFERASE"/>
    <property type="match status" value="1"/>
</dbReference>
<dbReference type="Pfam" id="PF08267">
    <property type="entry name" value="Meth_synt_1"/>
    <property type="match status" value="1"/>
</dbReference>
<dbReference type="Pfam" id="PF01717">
    <property type="entry name" value="Meth_synt_2"/>
    <property type="match status" value="1"/>
</dbReference>
<dbReference type="PIRSF" id="PIRSF000382">
    <property type="entry name" value="MeTrfase_B12_ind"/>
    <property type="match status" value="1"/>
</dbReference>
<dbReference type="SUPFAM" id="SSF51726">
    <property type="entry name" value="UROD/MetE-like"/>
    <property type="match status" value="2"/>
</dbReference>
<reference key="1">
    <citation type="journal article" date="2007" name="J. Bacteriol.">
        <title>The complete genome sequence of Bacillus thuringiensis Al Hakam.</title>
        <authorList>
            <person name="Challacombe J.F."/>
            <person name="Altherr M.R."/>
            <person name="Xie G."/>
            <person name="Bhotika S.S."/>
            <person name="Brown N."/>
            <person name="Bruce D."/>
            <person name="Campbell C.S."/>
            <person name="Campbell M.L."/>
            <person name="Chen J."/>
            <person name="Chertkov O."/>
            <person name="Cleland C."/>
            <person name="Dimitrijevic M."/>
            <person name="Doggett N.A."/>
            <person name="Fawcett J.J."/>
            <person name="Glavina T."/>
            <person name="Goodwin L.A."/>
            <person name="Green L.D."/>
            <person name="Han C.S."/>
            <person name="Hill K.K."/>
            <person name="Hitchcock P."/>
            <person name="Jackson P.J."/>
            <person name="Keim P."/>
            <person name="Kewalramani A.R."/>
            <person name="Longmire J."/>
            <person name="Lucas S."/>
            <person name="Malfatti S."/>
            <person name="Martinez D."/>
            <person name="McMurry K."/>
            <person name="Meincke L.J."/>
            <person name="Misra M."/>
            <person name="Moseman B.L."/>
            <person name="Mundt M."/>
            <person name="Munk A.C."/>
            <person name="Okinaka R.T."/>
            <person name="Parson-Quintana B."/>
            <person name="Reilly L.P."/>
            <person name="Richardson P."/>
            <person name="Robinson D.L."/>
            <person name="Saunders E."/>
            <person name="Tapia R."/>
            <person name="Tesmer J.G."/>
            <person name="Thayer N."/>
            <person name="Thompson L.S."/>
            <person name="Tice H."/>
            <person name="Ticknor L.O."/>
            <person name="Wills P.L."/>
            <person name="Gilna P."/>
            <person name="Brettin T.S."/>
        </authorList>
    </citation>
    <scope>NUCLEOTIDE SEQUENCE [LARGE SCALE GENOMIC DNA]</scope>
    <source>
        <strain>Al Hakam</strain>
    </source>
</reference>
<evidence type="ECO:0000255" key="1">
    <source>
        <dbReference type="HAMAP-Rule" id="MF_00172"/>
    </source>
</evidence>
<feature type="chain" id="PRO_1000017220" description="5-methyltetrahydropteroyltriglutamate--homocysteine methyltransferase">
    <location>
        <begin position="1"/>
        <end position="762"/>
    </location>
</feature>
<feature type="active site" description="Proton donor" evidence="1">
    <location>
        <position position="698"/>
    </location>
</feature>
<feature type="binding site" evidence="1">
    <location>
        <begin position="17"/>
        <end position="20"/>
    </location>
    <ligand>
        <name>5-methyltetrahydropteroyltri-L-glutamate</name>
        <dbReference type="ChEBI" id="CHEBI:58207"/>
    </ligand>
</feature>
<feature type="binding site" evidence="1">
    <location>
        <position position="111"/>
    </location>
    <ligand>
        <name>5-methyltetrahydropteroyltri-L-glutamate</name>
        <dbReference type="ChEBI" id="CHEBI:58207"/>
    </ligand>
</feature>
<feature type="binding site" evidence="1">
    <location>
        <begin position="435"/>
        <end position="437"/>
    </location>
    <ligand>
        <name>L-homocysteine</name>
        <dbReference type="ChEBI" id="CHEBI:58199"/>
    </ligand>
</feature>
<feature type="binding site" evidence="1">
    <location>
        <begin position="435"/>
        <end position="437"/>
    </location>
    <ligand>
        <name>L-methionine</name>
        <dbReference type="ChEBI" id="CHEBI:57844"/>
    </ligand>
</feature>
<feature type="binding site" evidence="1">
    <location>
        <position position="488"/>
    </location>
    <ligand>
        <name>L-homocysteine</name>
        <dbReference type="ChEBI" id="CHEBI:58199"/>
    </ligand>
</feature>
<feature type="binding site" evidence="1">
    <location>
        <position position="488"/>
    </location>
    <ligand>
        <name>L-methionine</name>
        <dbReference type="ChEBI" id="CHEBI:57844"/>
    </ligand>
</feature>
<feature type="binding site" evidence="1">
    <location>
        <begin position="519"/>
        <end position="520"/>
    </location>
    <ligand>
        <name>5-methyltetrahydropteroyltri-L-glutamate</name>
        <dbReference type="ChEBI" id="CHEBI:58207"/>
    </ligand>
</feature>
<feature type="binding site" evidence="1">
    <location>
        <position position="565"/>
    </location>
    <ligand>
        <name>5-methyltetrahydropteroyltri-L-glutamate</name>
        <dbReference type="ChEBI" id="CHEBI:58207"/>
    </ligand>
</feature>
<feature type="binding site" evidence="1">
    <location>
        <position position="603"/>
    </location>
    <ligand>
        <name>L-homocysteine</name>
        <dbReference type="ChEBI" id="CHEBI:58199"/>
    </ligand>
</feature>
<feature type="binding site" evidence="1">
    <location>
        <position position="603"/>
    </location>
    <ligand>
        <name>L-methionine</name>
        <dbReference type="ChEBI" id="CHEBI:57844"/>
    </ligand>
</feature>
<feature type="binding site" evidence="1">
    <location>
        <position position="609"/>
    </location>
    <ligand>
        <name>5-methyltetrahydropteroyltri-L-glutamate</name>
        <dbReference type="ChEBI" id="CHEBI:58207"/>
    </ligand>
</feature>
<feature type="binding site" evidence="1">
    <location>
        <position position="645"/>
    </location>
    <ligand>
        <name>Zn(2+)</name>
        <dbReference type="ChEBI" id="CHEBI:29105"/>
        <note>catalytic</note>
    </ligand>
</feature>
<feature type="binding site" evidence="1">
    <location>
        <position position="647"/>
    </location>
    <ligand>
        <name>Zn(2+)</name>
        <dbReference type="ChEBI" id="CHEBI:29105"/>
        <note>catalytic</note>
    </ligand>
</feature>
<feature type="binding site" evidence="1">
    <location>
        <position position="669"/>
    </location>
    <ligand>
        <name>Zn(2+)</name>
        <dbReference type="ChEBI" id="CHEBI:29105"/>
        <note>catalytic</note>
    </ligand>
</feature>
<feature type="binding site" evidence="1">
    <location>
        <position position="730"/>
    </location>
    <ligand>
        <name>Zn(2+)</name>
        <dbReference type="ChEBI" id="CHEBI:29105"/>
        <note>catalytic</note>
    </ligand>
</feature>
<sequence length="762" mass="87233">MAIQTSNLGYPRIGLQREWKKTLEAFWSNKINEEQFLTTMKEIRLQHVKVQQEKGIELIPIGDFTYYDHVLDTAYMLGFIPSRFSEFTSYLDVYFAMARGSKDHVASEMTKWFNTNYHYIVPEYEEGLQISLKDNRPLRLYEEAKQELGVDGKPVILGPYTFLKLAKGYTQEQFATILKQLVAPYVQLLSELHAAGAQIIQVDEPIFASLTKEEVQQAKEIYEAIRKEVPNATLLLQTYFDSVEENYEEIITFPVSSIGLDFVHGKEGNLNAISKYGFPADKTLAVGCIDGRNIWRADLDEVLTLFTTLQKQVQTKDLIVQPSCSLLHTPIDKTEETHLSTELFDALAFANQKLEELVLIHSALTQGTESISNELETYRNVHHTIRSSAARNREDVKAARTALKEEDFSRPLPFEKRYELQQVALKLPLLPTTTIGSFPQTTEVRQTRKEWRNGIISNEQYEQFIEKETEKWIRYQEEIGLDVLVHGEFERTDMVEYFGERLAGFSFTKNGWVQSYGSRCVKPPVIYGDVAFINGMTIKETVYAQSLTEKVVKGMLTGPVTILNWSFVRNDIPRKEVSYQIALALRHEIELLESSGIRVIQVDEPALREGMPLKEKDWDAYITWAVQSFLLATSSVANETQIHTHMCYSNFEDIVDAIRALDADVISIETSRSHGEFIDTLKHTTYEKGIGLGVYDIHSPRVPSKDEMYEIVEQSLQVCDPKYFWINPDCGLKTRRTEEVIPALEHMVQAAKDARSLLKTNA</sequence>
<accession>A0RI12</accession>